<accession>P28619</accession>
<comment type="function">
    <text evidence="1 3">Phosphorolytic 3'-5' exoribonuclease that plays an important role in tRNA 3'-end maturation. Removes nucleotide residues following the 3'-CCA terminus of tRNAs; can also add nucleotides to the ends of RNA molecules by using nucleoside diphosphates as substrates, but this may not be physiologically important. Probably plays a role in initiation of 16S rRNA degradation (leading to ribosome degradation) during starvation. Plays a role in the secondary pathway of 23S rRNA 3' end maturation (PubMed:19880604).</text>
</comment>
<comment type="catalytic activity">
    <reaction evidence="1">
        <text>tRNA(n+1) + phosphate = tRNA(n) + a ribonucleoside 5'-diphosphate</text>
        <dbReference type="Rhea" id="RHEA:10628"/>
        <dbReference type="Rhea" id="RHEA-COMP:17343"/>
        <dbReference type="Rhea" id="RHEA-COMP:17344"/>
        <dbReference type="ChEBI" id="CHEBI:43474"/>
        <dbReference type="ChEBI" id="CHEBI:57930"/>
        <dbReference type="ChEBI" id="CHEBI:173114"/>
        <dbReference type="EC" id="2.7.7.56"/>
    </reaction>
</comment>
<comment type="subunit">
    <text evidence="1 2">Homohexameric ring arranged as a trimer of dimers (PubMed:14767080). It has been suggested that the active form is the dimer which binds tRNA and that the hexameric form protects the substrate recognition loop (approximately residues 65-82) from proteolysis (PubMed:14767080).</text>
</comment>
<comment type="disruption phenotype">
    <text evidence="3">Correct processing of the 3' end of 23S rRNA no longer occurs in the absence of mrnC.</text>
</comment>
<comment type="miscellaneous">
    <text evidence="4">Sulfate ions in the crystal structure may represent the inorganic phosphate substrate.</text>
</comment>
<comment type="similarity">
    <text evidence="1">Belongs to the RNase PH family.</text>
</comment>
<sequence>MRHDGRQHDELRPITFDLDFISHPEGSVLITAGNTKVICNASVEDRVPPFLRGGGKGWITAEYSMLPRATNQRTIRESSKGKISGRTMEIQRLIGRALRAVVDLEKLGERTIWIDCDVIQADGGTRTASITGAFLAMAIAIGKLIKAGTIKTNPITDFLAAISVGIDKEQGILLDLNYEEDSSAEVDMNVIMTGSGRFVELQGTGEEATFSREDLNGLLGLAEKGIQELIDKQKEVLGDSLPELK</sequence>
<feature type="chain" id="PRO_0000139869" description="Ribonuclease PH">
    <location>
        <begin position="1"/>
        <end position="245"/>
    </location>
</feature>
<feature type="binding site" evidence="1">
    <location>
        <position position="86"/>
    </location>
    <ligand>
        <name>phosphate</name>
        <dbReference type="ChEBI" id="CHEBI:43474"/>
        <note>substrate</note>
    </ligand>
</feature>
<feature type="binding site" evidence="1 4">
    <location>
        <begin position="124"/>
        <end position="126"/>
    </location>
    <ligand>
        <name>phosphate</name>
        <dbReference type="ChEBI" id="CHEBI:43474"/>
        <note>substrate</note>
    </ligand>
</feature>
<feature type="mutagenesis site" description="Protein crystallizes as a dimer." evidence="2">
    <original>RATNQRTIR</original>
    <variation>QATNQQTIQ</variation>
    <location>
        <begin position="68"/>
        <end position="76"/>
    </location>
</feature>
<feature type="strand" evidence="10">
    <location>
        <begin position="14"/>
        <end position="17"/>
    </location>
</feature>
<feature type="strand" evidence="10">
    <location>
        <begin position="28"/>
        <end position="32"/>
    </location>
</feature>
<feature type="strand" evidence="10">
    <location>
        <begin position="35"/>
        <end position="45"/>
    </location>
</feature>
<feature type="helix" evidence="10">
    <location>
        <begin position="49"/>
        <end position="51"/>
    </location>
</feature>
<feature type="strand" evidence="8">
    <location>
        <begin position="52"/>
        <end position="55"/>
    </location>
</feature>
<feature type="strand" evidence="10">
    <location>
        <begin position="58"/>
        <end position="64"/>
    </location>
</feature>
<feature type="helix" evidence="9">
    <location>
        <begin position="67"/>
        <end position="69"/>
    </location>
</feature>
<feature type="strand" evidence="9">
    <location>
        <begin position="70"/>
        <end position="72"/>
    </location>
</feature>
<feature type="turn" evidence="9">
    <location>
        <begin position="77"/>
        <end position="79"/>
    </location>
</feature>
<feature type="strand" evidence="9">
    <location>
        <begin position="80"/>
        <end position="82"/>
    </location>
</feature>
<feature type="helix" evidence="10">
    <location>
        <begin position="86"/>
        <end position="100"/>
    </location>
</feature>
<feature type="helix" evidence="10">
    <location>
        <begin position="104"/>
        <end position="107"/>
    </location>
</feature>
<feature type="strand" evidence="10">
    <location>
        <begin position="111"/>
        <end position="120"/>
    </location>
</feature>
<feature type="helix" evidence="10">
    <location>
        <begin position="125"/>
        <end position="146"/>
    </location>
</feature>
<feature type="strand" evidence="10">
    <location>
        <begin position="149"/>
        <end position="152"/>
    </location>
</feature>
<feature type="strand" evidence="10">
    <location>
        <begin position="159"/>
        <end position="167"/>
    </location>
</feature>
<feature type="turn" evidence="10">
    <location>
        <begin position="168"/>
        <end position="170"/>
    </location>
</feature>
<feature type="strand" evidence="10">
    <location>
        <begin position="171"/>
        <end position="175"/>
    </location>
</feature>
<feature type="helix" evidence="10">
    <location>
        <begin position="178"/>
        <end position="183"/>
    </location>
</feature>
<feature type="strand" evidence="10">
    <location>
        <begin position="185"/>
        <end position="193"/>
    </location>
</feature>
<feature type="strand" evidence="10">
    <location>
        <begin position="198"/>
        <end position="207"/>
    </location>
</feature>
<feature type="helix" evidence="10">
    <location>
        <begin position="212"/>
        <end position="236"/>
    </location>
</feature>
<feature type="helix" evidence="8">
    <location>
        <begin position="238"/>
        <end position="240"/>
    </location>
</feature>
<reference key="1">
    <citation type="journal article" date="1992" name="J. Bacteriol.">
        <title>Identification of the rph (RNase PH) gene of Bacillus subtilis: evidence for suppression of cold-sensitive mutations in Escherichia coli.</title>
        <authorList>
            <person name="Craven M.G."/>
            <person name="Henner D.J."/>
            <person name="Alessi D."/>
            <person name="Schauer A.T."/>
            <person name="Ost K.A."/>
            <person name="Deutscher M.P."/>
            <person name="Friedman D.I."/>
        </authorList>
    </citation>
    <scope>NUCLEOTIDE SEQUENCE [GENOMIC DNA]</scope>
</reference>
<reference key="2">
    <citation type="journal article" date="1996" name="Microbiology">
        <title>The dnaB-pheA (256 degrees-240 degrees) region of the Bacillus subtilis chromosome containing genes responsible for stress responses, the utilization of plant cell walls and primary metabolism.</title>
        <authorList>
            <person name="Wipat A."/>
            <person name="Carter N."/>
            <person name="Brignell C.S."/>
            <person name="Guy J.B."/>
            <person name="Piper K."/>
            <person name="Sanders J."/>
            <person name="Emmerson P.T."/>
            <person name="Harwood C.R."/>
        </authorList>
    </citation>
    <scope>NUCLEOTIDE SEQUENCE [GENOMIC DNA]</scope>
    <source>
        <strain>168</strain>
    </source>
</reference>
<reference key="3">
    <citation type="journal article" date="1997" name="Nature">
        <title>The complete genome sequence of the Gram-positive bacterium Bacillus subtilis.</title>
        <authorList>
            <person name="Kunst F."/>
            <person name="Ogasawara N."/>
            <person name="Moszer I."/>
            <person name="Albertini A.M."/>
            <person name="Alloni G."/>
            <person name="Azevedo V."/>
            <person name="Bertero M.G."/>
            <person name="Bessieres P."/>
            <person name="Bolotin A."/>
            <person name="Borchert S."/>
            <person name="Borriss R."/>
            <person name="Boursier L."/>
            <person name="Brans A."/>
            <person name="Braun M."/>
            <person name="Brignell S.C."/>
            <person name="Bron S."/>
            <person name="Brouillet S."/>
            <person name="Bruschi C.V."/>
            <person name="Caldwell B."/>
            <person name="Capuano V."/>
            <person name="Carter N.M."/>
            <person name="Choi S.-K."/>
            <person name="Codani J.-J."/>
            <person name="Connerton I.F."/>
            <person name="Cummings N.J."/>
            <person name="Daniel R.A."/>
            <person name="Denizot F."/>
            <person name="Devine K.M."/>
            <person name="Duesterhoeft A."/>
            <person name="Ehrlich S.D."/>
            <person name="Emmerson P.T."/>
            <person name="Entian K.-D."/>
            <person name="Errington J."/>
            <person name="Fabret C."/>
            <person name="Ferrari E."/>
            <person name="Foulger D."/>
            <person name="Fritz C."/>
            <person name="Fujita M."/>
            <person name="Fujita Y."/>
            <person name="Fuma S."/>
            <person name="Galizzi A."/>
            <person name="Galleron N."/>
            <person name="Ghim S.-Y."/>
            <person name="Glaser P."/>
            <person name="Goffeau A."/>
            <person name="Golightly E.J."/>
            <person name="Grandi G."/>
            <person name="Guiseppi G."/>
            <person name="Guy B.J."/>
            <person name="Haga K."/>
            <person name="Haiech J."/>
            <person name="Harwood C.R."/>
            <person name="Henaut A."/>
            <person name="Hilbert H."/>
            <person name="Holsappel S."/>
            <person name="Hosono S."/>
            <person name="Hullo M.-F."/>
            <person name="Itaya M."/>
            <person name="Jones L.-M."/>
            <person name="Joris B."/>
            <person name="Karamata D."/>
            <person name="Kasahara Y."/>
            <person name="Klaerr-Blanchard M."/>
            <person name="Klein C."/>
            <person name="Kobayashi Y."/>
            <person name="Koetter P."/>
            <person name="Koningstein G."/>
            <person name="Krogh S."/>
            <person name="Kumano M."/>
            <person name="Kurita K."/>
            <person name="Lapidus A."/>
            <person name="Lardinois S."/>
            <person name="Lauber J."/>
            <person name="Lazarevic V."/>
            <person name="Lee S.-M."/>
            <person name="Levine A."/>
            <person name="Liu H."/>
            <person name="Masuda S."/>
            <person name="Mauel C."/>
            <person name="Medigue C."/>
            <person name="Medina N."/>
            <person name="Mellado R.P."/>
            <person name="Mizuno M."/>
            <person name="Moestl D."/>
            <person name="Nakai S."/>
            <person name="Noback M."/>
            <person name="Noone D."/>
            <person name="O'Reilly M."/>
            <person name="Ogawa K."/>
            <person name="Ogiwara A."/>
            <person name="Oudega B."/>
            <person name="Park S.-H."/>
            <person name="Parro V."/>
            <person name="Pohl T.M."/>
            <person name="Portetelle D."/>
            <person name="Porwollik S."/>
            <person name="Prescott A.M."/>
            <person name="Presecan E."/>
            <person name="Pujic P."/>
            <person name="Purnelle B."/>
            <person name="Rapoport G."/>
            <person name="Rey M."/>
            <person name="Reynolds S."/>
            <person name="Rieger M."/>
            <person name="Rivolta C."/>
            <person name="Rocha E."/>
            <person name="Roche B."/>
            <person name="Rose M."/>
            <person name="Sadaie Y."/>
            <person name="Sato T."/>
            <person name="Scanlan E."/>
            <person name="Schleich S."/>
            <person name="Schroeter R."/>
            <person name="Scoffone F."/>
            <person name="Sekiguchi J."/>
            <person name="Sekowska A."/>
            <person name="Seror S.J."/>
            <person name="Serror P."/>
            <person name="Shin B.-S."/>
            <person name="Soldo B."/>
            <person name="Sorokin A."/>
            <person name="Tacconi E."/>
            <person name="Takagi T."/>
            <person name="Takahashi H."/>
            <person name="Takemaru K."/>
            <person name="Takeuchi M."/>
            <person name="Tamakoshi A."/>
            <person name="Tanaka T."/>
            <person name="Terpstra P."/>
            <person name="Tognoni A."/>
            <person name="Tosato V."/>
            <person name="Uchiyama S."/>
            <person name="Vandenbol M."/>
            <person name="Vannier F."/>
            <person name="Vassarotti A."/>
            <person name="Viari A."/>
            <person name="Wambutt R."/>
            <person name="Wedler E."/>
            <person name="Wedler H."/>
            <person name="Weitzenegger T."/>
            <person name="Winters P."/>
            <person name="Wipat A."/>
            <person name="Yamamoto H."/>
            <person name="Yamane K."/>
            <person name="Yasumoto K."/>
            <person name="Yata K."/>
            <person name="Yoshida K."/>
            <person name="Yoshikawa H.-F."/>
            <person name="Zumstein E."/>
            <person name="Yoshikawa H."/>
            <person name="Danchin A."/>
        </authorList>
    </citation>
    <scope>NUCLEOTIDE SEQUENCE [LARGE SCALE GENOMIC DNA]</scope>
    <source>
        <strain>168</strain>
    </source>
</reference>
<reference key="4">
    <citation type="journal article" date="2010" name="J. Bacteriol.">
        <title>Maturation of 23S rRNA in Bacillus subtilis in the absence of Mini-III.</title>
        <authorList>
            <person name="Redko Y."/>
            <person name="Condon C."/>
        </authorList>
    </citation>
    <scope>FUNCTION IN 23S RRNA PROCESSING</scope>
    <scope>RNASE ACTIVITY</scope>
    <scope>DISRUPTION PHENOTYPE</scope>
</reference>
<reference evidence="5 6 7" key="5">
    <citation type="journal article" date="2004" name="Protein Sci.">
        <title>Crystal structure of the phosphorolytic exoribonuclease RNase PH from Bacillus subtilis and implications for its quaternary structure and tRNA binding.</title>
        <authorList>
            <person name="Harlow L.S."/>
            <person name="Kadziola A."/>
            <person name="Jensen K.F."/>
            <person name="Larsen S."/>
        </authorList>
    </citation>
    <scope>X-RAY CRYSTALLOGRAPHY (2.40 ANGSTROMS) IN COMPLEX WITH SUBSTRATE</scope>
    <scope>SUBUNIT</scope>
    <scope>MUTAGENESIS OF 68-ARG--ARG-76</scope>
</reference>
<keyword id="KW-0002">3D-structure</keyword>
<keyword id="KW-0548">Nucleotidyltransferase</keyword>
<keyword id="KW-1185">Reference proteome</keyword>
<keyword id="KW-0694">RNA-binding</keyword>
<keyword id="KW-0698">rRNA processing</keyword>
<keyword id="KW-0808">Transferase</keyword>
<keyword id="KW-0819">tRNA processing</keyword>
<keyword id="KW-0820">tRNA-binding</keyword>
<organism>
    <name type="scientific">Bacillus subtilis (strain 168)</name>
    <dbReference type="NCBI Taxonomy" id="224308"/>
    <lineage>
        <taxon>Bacteria</taxon>
        <taxon>Bacillati</taxon>
        <taxon>Bacillota</taxon>
        <taxon>Bacilli</taxon>
        <taxon>Bacillales</taxon>
        <taxon>Bacillaceae</taxon>
        <taxon>Bacillus</taxon>
    </lineage>
</organism>
<evidence type="ECO:0000255" key="1">
    <source>
        <dbReference type="HAMAP-Rule" id="MF_00564"/>
    </source>
</evidence>
<evidence type="ECO:0000269" key="2">
    <source>
    </source>
</evidence>
<evidence type="ECO:0000269" key="3">
    <source>
    </source>
</evidence>
<evidence type="ECO:0000305" key="4">
    <source>
    </source>
</evidence>
<evidence type="ECO:0007744" key="5">
    <source>
        <dbReference type="PDB" id="1OYP"/>
    </source>
</evidence>
<evidence type="ECO:0007744" key="6">
    <source>
        <dbReference type="PDB" id="1OYR"/>
    </source>
</evidence>
<evidence type="ECO:0007744" key="7">
    <source>
        <dbReference type="PDB" id="1OYS"/>
    </source>
</evidence>
<evidence type="ECO:0007829" key="8">
    <source>
        <dbReference type="PDB" id="1OYP"/>
    </source>
</evidence>
<evidence type="ECO:0007829" key="9">
    <source>
        <dbReference type="PDB" id="1OYR"/>
    </source>
</evidence>
<evidence type="ECO:0007829" key="10">
    <source>
        <dbReference type="PDB" id="1OYS"/>
    </source>
</evidence>
<proteinExistence type="evidence at protein level"/>
<protein>
    <recommendedName>
        <fullName evidence="1">Ribonuclease PH</fullName>
        <shortName evidence="1">RNase PH</shortName>
        <ecNumber evidence="1">2.7.7.56</ecNumber>
    </recommendedName>
    <alternativeName>
        <fullName evidence="1">tRNA nucleotidyltransferase</fullName>
    </alternativeName>
</protein>
<dbReference type="EC" id="2.7.7.56" evidence="1"/>
<dbReference type="EMBL" id="M85163">
    <property type="protein sequence ID" value="AAA22705.1"/>
    <property type="molecule type" value="Genomic_DNA"/>
</dbReference>
<dbReference type="EMBL" id="Z75208">
    <property type="protein sequence ID" value="CAA99554.1"/>
    <property type="molecule type" value="Genomic_DNA"/>
</dbReference>
<dbReference type="EMBL" id="AL009126">
    <property type="protein sequence ID" value="CAB14797.1"/>
    <property type="molecule type" value="Genomic_DNA"/>
</dbReference>
<dbReference type="PIR" id="A44914">
    <property type="entry name" value="A44914"/>
</dbReference>
<dbReference type="RefSeq" id="NP_390715.1">
    <property type="nucleotide sequence ID" value="NC_000964.3"/>
</dbReference>
<dbReference type="RefSeq" id="WP_003246039.1">
    <property type="nucleotide sequence ID" value="NZ_OZ025638.1"/>
</dbReference>
<dbReference type="PDB" id="1OYP">
    <property type="method" value="X-ray"/>
    <property type="resolution" value="2.76 A"/>
    <property type="chains" value="A/B/C/D/E/F=1-245"/>
</dbReference>
<dbReference type="PDB" id="1OYR">
    <property type="method" value="X-ray"/>
    <property type="resolution" value="3.10 A"/>
    <property type="chains" value="A/B/C/D/E/F=1-245"/>
</dbReference>
<dbReference type="PDB" id="1OYS">
    <property type="method" value="X-ray"/>
    <property type="resolution" value="2.40 A"/>
    <property type="chains" value="A=1-245"/>
</dbReference>
<dbReference type="PDBsum" id="1OYP"/>
<dbReference type="PDBsum" id="1OYR"/>
<dbReference type="PDBsum" id="1OYS"/>
<dbReference type="SMR" id="P28619"/>
<dbReference type="FunCoup" id="P28619">
    <property type="interactions" value="435"/>
</dbReference>
<dbReference type="STRING" id="224308.BSU28370"/>
<dbReference type="PaxDb" id="224308-BSU28370"/>
<dbReference type="EnsemblBacteria" id="CAB14797">
    <property type="protein sequence ID" value="CAB14797"/>
    <property type="gene ID" value="BSU_28370"/>
</dbReference>
<dbReference type="GeneID" id="86872649"/>
<dbReference type="GeneID" id="937463"/>
<dbReference type="KEGG" id="bsu:BSU28370"/>
<dbReference type="PATRIC" id="fig|224308.179.peg.3082"/>
<dbReference type="eggNOG" id="COG0689">
    <property type="taxonomic scope" value="Bacteria"/>
</dbReference>
<dbReference type="InParanoid" id="P28619"/>
<dbReference type="OrthoDB" id="9802265at2"/>
<dbReference type="PhylomeDB" id="P28619"/>
<dbReference type="BioCyc" id="BSUB:BSU28370-MONOMER"/>
<dbReference type="EvolutionaryTrace" id="P28619"/>
<dbReference type="PRO" id="PR:P28619"/>
<dbReference type="Proteomes" id="UP000001570">
    <property type="component" value="Chromosome"/>
</dbReference>
<dbReference type="GO" id="GO:0000175">
    <property type="term" value="F:3'-5'-RNA exonuclease activity"/>
    <property type="evidence" value="ECO:0007669"/>
    <property type="project" value="UniProtKB-UniRule"/>
</dbReference>
<dbReference type="GO" id="GO:0003723">
    <property type="term" value="F:RNA binding"/>
    <property type="evidence" value="ECO:0000318"/>
    <property type="project" value="GO_Central"/>
</dbReference>
<dbReference type="GO" id="GO:0000049">
    <property type="term" value="F:tRNA binding"/>
    <property type="evidence" value="ECO:0007669"/>
    <property type="project" value="UniProtKB-UniRule"/>
</dbReference>
<dbReference type="GO" id="GO:0009022">
    <property type="term" value="F:tRNA nucleotidyltransferase activity"/>
    <property type="evidence" value="ECO:0007669"/>
    <property type="project" value="UniProtKB-UniRule"/>
</dbReference>
<dbReference type="GO" id="GO:0031125">
    <property type="term" value="P:rRNA 3'-end processing"/>
    <property type="evidence" value="ECO:0000315"/>
    <property type="project" value="UniProtKB"/>
</dbReference>
<dbReference type="GO" id="GO:0016075">
    <property type="term" value="P:rRNA catabolic process"/>
    <property type="evidence" value="ECO:0000318"/>
    <property type="project" value="GO_Central"/>
</dbReference>
<dbReference type="GO" id="GO:0008033">
    <property type="term" value="P:tRNA processing"/>
    <property type="evidence" value="ECO:0007669"/>
    <property type="project" value="UniProtKB-UniRule"/>
</dbReference>
<dbReference type="CDD" id="cd11362">
    <property type="entry name" value="RNase_PH_bact"/>
    <property type="match status" value="1"/>
</dbReference>
<dbReference type="FunFam" id="3.30.230.70:FF:000003">
    <property type="entry name" value="Ribonuclease PH"/>
    <property type="match status" value="1"/>
</dbReference>
<dbReference type="Gene3D" id="3.30.230.70">
    <property type="entry name" value="GHMP Kinase, N-terminal domain"/>
    <property type="match status" value="1"/>
</dbReference>
<dbReference type="HAMAP" id="MF_00564">
    <property type="entry name" value="RNase_PH"/>
    <property type="match status" value="1"/>
</dbReference>
<dbReference type="InterPro" id="IPR001247">
    <property type="entry name" value="ExoRNase_PH_dom1"/>
</dbReference>
<dbReference type="InterPro" id="IPR015847">
    <property type="entry name" value="ExoRNase_PH_dom2"/>
</dbReference>
<dbReference type="InterPro" id="IPR036345">
    <property type="entry name" value="ExoRNase_PH_dom2_sf"/>
</dbReference>
<dbReference type="InterPro" id="IPR027408">
    <property type="entry name" value="PNPase/RNase_PH_dom_sf"/>
</dbReference>
<dbReference type="InterPro" id="IPR020568">
    <property type="entry name" value="Ribosomal_Su5_D2-typ_SF"/>
</dbReference>
<dbReference type="InterPro" id="IPR050080">
    <property type="entry name" value="RNase_PH"/>
</dbReference>
<dbReference type="InterPro" id="IPR002381">
    <property type="entry name" value="RNase_PH_bac-type"/>
</dbReference>
<dbReference type="InterPro" id="IPR018336">
    <property type="entry name" value="RNase_PH_CS"/>
</dbReference>
<dbReference type="NCBIfam" id="TIGR01966">
    <property type="entry name" value="RNasePH"/>
    <property type="match status" value="1"/>
</dbReference>
<dbReference type="PANTHER" id="PTHR11953">
    <property type="entry name" value="EXOSOME COMPLEX COMPONENT"/>
    <property type="match status" value="1"/>
</dbReference>
<dbReference type="PANTHER" id="PTHR11953:SF0">
    <property type="entry name" value="EXOSOME COMPLEX COMPONENT RRP41"/>
    <property type="match status" value="1"/>
</dbReference>
<dbReference type="Pfam" id="PF01138">
    <property type="entry name" value="RNase_PH"/>
    <property type="match status" value="1"/>
</dbReference>
<dbReference type="Pfam" id="PF03725">
    <property type="entry name" value="RNase_PH_C"/>
    <property type="match status" value="1"/>
</dbReference>
<dbReference type="SUPFAM" id="SSF55666">
    <property type="entry name" value="Ribonuclease PH domain 2-like"/>
    <property type="match status" value="1"/>
</dbReference>
<dbReference type="SUPFAM" id="SSF54211">
    <property type="entry name" value="Ribosomal protein S5 domain 2-like"/>
    <property type="match status" value="1"/>
</dbReference>
<dbReference type="PROSITE" id="PS01277">
    <property type="entry name" value="RIBONUCLEASE_PH"/>
    <property type="match status" value="1"/>
</dbReference>
<name>RNPH_BACSU</name>
<gene>
    <name evidence="1" type="primary">rph</name>
    <name type="ordered locus">BSU28370</name>
</gene>